<dbReference type="EMBL" id="Z75094">
    <property type="status" value="NOT_ANNOTATED_CDS"/>
    <property type="molecule type" value="Genomic_DNA"/>
</dbReference>
<dbReference type="EMBL" id="AF479979">
    <property type="protein sequence ID" value="AAL79292.1"/>
    <property type="molecule type" value="Genomic_DNA"/>
</dbReference>
<dbReference type="SMR" id="Q8TGL3"/>
<dbReference type="STRING" id="4932.YOR186C-A"/>
<dbReference type="PaxDb" id="4932-YOR186C-A"/>
<dbReference type="EnsemblFungi" id="YOR186C-A_mRNA">
    <property type="protein sequence ID" value="YOR186C-A"/>
    <property type="gene ID" value="YOR186C-A"/>
</dbReference>
<dbReference type="AGR" id="SGD:S000028715"/>
<dbReference type="SGD" id="S000028715">
    <property type="gene designation" value="YOR186C-A"/>
</dbReference>
<dbReference type="HOGENOM" id="CLU_2777835_0_0_1"/>
<feature type="chain" id="PRO_0000299721" description="Putative uncharacterized protein YOR186C-A">
    <location>
        <begin position="1"/>
        <end position="69"/>
    </location>
</feature>
<evidence type="ECO:0000305" key="1"/>
<evidence type="ECO:0000305" key="2">
    <source>
    </source>
</evidence>
<gene>
    <name type="ordered locus">YOR186C-A</name>
</gene>
<name>YO86A_YEAST</name>
<proteinExistence type="uncertain"/>
<accession>Q8TGL3</accession>
<organism>
    <name type="scientific">Saccharomyces cerevisiae (strain ATCC 204508 / S288c)</name>
    <name type="common">Baker's yeast</name>
    <dbReference type="NCBI Taxonomy" id="559292"/>
    <lineage>
        <taxon>Eukaryota</taxon>
        <taxon>Fungi</taxon>
        <taxon>Dikarya</taxon>
        <taxon>Ascomycota</taxon>
        <taxon>Saccharomycotina</taxon>
        <taxon>Saccharomycetes</taxon>
        <taxon>Saccharomycetales</taxon>
        <taxon>Saccharomycetaceae</taxon>
        <taxon>Saccharomyces</taxon>
    </lineage>
</organism>
<sequence>MSESDNCFSSSSILLDGTTSVALFSFSPGYRDVSTSVIQSSKQAMKRPNMNQEKAIQTSCNLNSSVVRS</sequence>
<comment type="miscellaneous">
    <text evidence="1">Completely overlaps YOR186W.</text>
</comment>
<comment type="caution">
    <text evidence="2">Product of a dubious gene prediction unlikely to encode a functional protein. Because of that it is not part of the S.cerevisiae S288c complete/reference proteome set.</text>
</comment>
<protein>
    <recommendedName>
        <fullName>Putative uncharacterized protein YOR186C-A</fullName>
    </recommendedName>
</protein>
<reference key="1">
    <citation type="journal article" date="1997" name="Nature">
        <title>The nucleotide sequence of Saccharomyces cerevisiae chromosome XV.</title>
        <authorList>
            <person name="Dujon B."/>
            <person name="Albermann K."/>
            <person name="Aldea M."/>
            <person name="Alexandraki D."/>
            <person name="Ansorge W."/>
            <person name="Arino J."/>
            <person name="Benes V."/>
            <person name="Bohn C."/>
            <person name="Bolotin-Fukuhara M."/>
            <person name="Bordonne R."/>
            <person name="Boyer J."/>
            <person name="Camasses A."/>
            <person name="Casamayor A."/>
            <person name="Casas C."/>
            <person name="Cheret G."/>
            <person name="Cziepluch C."/>
            <person name="Daignan-Fornier B."/>
            <person name="Dang V.-D."/>
            <person name="de Haan M."/>
            <person name="Delius H."/>
            <person name="Durand P."/>
            <person name="Fairhead C."/>
            <person name="Feldmann H."/>
            <person name="Gaillon L."/>
            <person name="Galisson F."/>
            <person name="Gamo F.-J."/>
            <person name="Gancedo C."/>
            <person name="Goffeau A."/>
            <person name="Goulding S.E."/>
            <person name="Grivell L.A."/>
            <person name="Habbig B."/>
            <person name="Hand N.J."/>
            <person name="Hani J."/>
            <person name="Hattenhorst U."/>
            <person name="Hebling U."/>
            <person name="Hernando Y."/>
            <person name="Herrero E."/>
            <person name="Heumann K."/>
            <person name="Hiesel R."/>
            <person name="Hilger F."/>
            <person name="Hofmann B."/>
            <person name="Hollenberg C.P."/>
            <person name="Hughes B."/>
            <person name="Jauniaux J.-C."/>
            <person name="Kalogeropoulos A."/>
            <person name="Katsoulou C."/>
            <person name="Kordes E."/>
            <person name="Lafuente M.J."/>
            <person name="Landt O."/>
            <person name="Louis E.J."/>
            <person name="Maarse A.C."/>
            <person name="Madania A."/>
            <person name="Mannhaupt G."/>
            <person name="Marck C."/>
            <person name="Martin R.P."/>
            <person name="Mewes H.-W."/>
            <person name="Michaux G."/>
            <person name="Paces V."/>
            <person name="Parle-McDermott A.G."/>
            <person name="Pearson B.M."/>
            <person name="Perrin A."/>
            <person name="Pettersson B."/>
            <person name="Poch O."/>
            <person name="Pohl T.M."/>
            <person name="Poirey R."/>
            <person name="Portetelle D."/>
            <person name="Pujol A."/>
            <person name="Purnelle B."/>
            <person name="Ramezani Rad M."/>
            <person name="Rechmann S."/>
            <person name="Schwager C."/>
            <person name="Schweizer M."/>
            <person name="Sor F."/>
            <person name="Sterky F."/>
            <person name="Tarassov I.A."/>
            <person name="Teodoru C."/>
            <person name="Tettelin H."/>
            <person name="Thierry A."/>
            <person name="Tobiasch E."/>
            <person name="Tzermia M."/>
            <person name="Uhlen M."/>
            <person name="Unseld M."/>
            <person name="Valens M."/>
            <person name="Vandenbol M."/>
            <person name="Vetter I."/>
            <person name="Vlcek C."/>
            <person name="Voet M."/>
            <person name="Volckaert G."/>
            <person name="Voss H."/>
            <person name="Wambutt R."/>
            <person name="Wedler H."/>
            <person name="Wiemann S."/>
            <person name="Winsor B."/>
            <person name="Wolfe K.H."/>
            <person name="Zollner A."/>
            <person name="Zumstein E."/>
            <person name="Kleine K."/>
        </authorList>
    </citation>
    <scope>NUCLEOTIDE SEQUENCE [LARGE SCALE GENOMIC DNA]</scope>
    <source>
        <strain>ATCC 204508 / S288c</strain>
    </source>
</reference>
<reference key="2">
    <citation type="journal article" date="2014" name="G3 (Bethesda)">
        <title>The reference genome sequence of Saccharomyces cerevisiae: Then and now.</title>
        <authorList>
            <person name="Engel S.R."/>
            <person name="Dietrich F.S."/>
            <person name="Fisk D.G."/>
            <person name="Binkley G."/>
            <person name="Balakrishnan R."/>
            <person name="Costanzo M.C."/>
            <person name="Dwight S.S."/>
            <person name="Hitz B.C."/>
            <person name="Karra K."/>
            <person name="Nash R.S."/>
            <person name="Weng S."/>
            <person name="Wong E.D."/>
            <person name="Lloyd P."/>
            <person name="Skrzypek M.S."/>
            <person name="Miyasato S.R."/>
            <person name="Simison M."/>
            <person name="Cherry J.M."/>
        </authorList>
    </citation>
    <scope>GENOME REANNOTATION</scope>
    <source>
        <strain>ATCC 204508 / S288c</strain>
    </source>
</reference>
<reference key="3">
    <citation type="journal article" date="2002" name="Nat. Biotechnol.">
        <title>An integrated approach for finding overlooked genes in yeast.</title>
        <authorList>
            <person name="Kumar A."/>
            <person name="Harrison P.M."/>
            <person name="Cheung K.-H."/>
            <person name="Lan N."/>
            <person name="Echols N."/>
            <person name="Bertone P."/>
            <person name="Miller P."/>
            <person name="Gerstein M.B."/>
            <person name="Snyder M."/>
        </authorList>
    </citation>
    <scope>NUCLEOTIDE SEQUENCE [GENOMIC DNA]</scope>
</reference>